<dbReference type="EMBL" id="Z81088">
    <property type="protein sequence ID" value="CAB03131.1"/>
    <property type="molecule type" value="Genomic_DNA"/>
</dbReference>
<dbReference type="PIR" id="T22570">
    <property type="entry name" value="T22570"/>
</dbReference>
<dbReference type="RefSeq" id="NP_506330.1">
    <property type="nucleotide sequence ID" value="NM_073929.4"/>
</dbReference>
<dbReference type="FunCoup" id="P92001">
    <property type="interactions" value="9"/>
</dbReference>
<dbReference type="STRING" id="6239.F53F1.10.1"/>
<dbReference type="PaxDb" id="6239-F53F1.10"/>
<dbReference type="EnsemblMetazoa" id="F53F1.10.1">
    <property type="protein sequence ID" value="F53F1.10.1"/>
    <property type="gene ID" value="WBGene00005096"/>
</dbReference>
<dbReference type="GeneID" id="191807"/>
<dbReference type="KEGG" id="cel:CELE_F53F1.10"/>
<dbReference type="UCSC" id="F53F1.10">
    <property type="organism name" value="c. elegans"/>
</dbReference>
<dbReference type="AGR" id="WB:WBGene00005096"/>
<dbReference type="CTD" id="191807"/>
<dbReference type="WormBase" id="F53F1.10">
    <property type="protein sequence ID" value="CE10950"/>
    <property type="gene ID" value="WBGene00005096"/>
    <property type="gene designation" value="srd-18"/>
</dbReference>
<dbReference type="eggNOG" id="ENOG502TJEM">
    <property type="taxonomic scope" value="Eukaryota"/>
</dbReference>
<dbReference type="GeneTree" id="ENSGT00970000195825"/>
<dbReference type="HOGENOM" id="CLU_057924_3_0_1"/>
<dbReference type="InParanoid" id="P92001"/>
<dbReference type="OMA" id="HMAVPIF"/>
<dbReference type="OrthoDB" id="5859769at2759"/>
<dbReference type="PhylomeDB" id="P92001"/>
<dbReference type="PRO" id="PR:P92001"/>
<dbReference type="Proteomes" id="UP000001940">
    <property type="component" value="Chromosome V"/>
</dbReference>
<dbReference type="GO" id="GO:0016020">
    <property type="term" value="C:membrane"/>
    <property type="evidence" value="ECO:0007669"/>
    <property type="project" value="UniProtKB-SubCell"/>
</dbReference>
<dbReference type="Gene3D" id="1.20.1070.10">
    <property type="entry name" value="Rhodopsin 7-helix transmembrane proteins"/>
    <property type="match status" value="1"/>
</dbReference>
<dbReference type="InterPro" id="IPR019421">
    <property type="entry name" value="7TM_GPCR_serpentine_rcpt_Srd"/>
</dbReference>
<dbReference type="InterPro" id="IPR050920">
    <property type="entry name" value="Nematode_rcpt-like_delta"/>
</dbReference>
<dbReference type="PANTHER" id="PTHR22945:SF40">
    <property type="entry name" value="SERPENTINE RECEPTOR, CLASS D (DELTA)-RELATED"/>
    <property type="match status" value="1"/>
</dbReference>
<dbReference type="PANTHER" id="PTHR22945">
    <property type="entry name" value="SERPENTINE RECEPTOR, CLASS D DELTA"/>
    <property type="match status" value="1"/>
</dbReference>
<dbReference type="Pfam" id="PF10317">
    <property type="entry name" value="7TM_GPCR_Srd"/>
    <property type="match status" value="1"/>
</dbReference>
<dbReference type="SUPFAM" id="SSF81321">
    <property type="entry name" value="Family A G protein-coupled receptor-like"/>
    <property type="match status" value="1"/>
</dbReference>
<accession>P92001</accession>
<evidence type="ECO:0000255" key="1"/>
<evidence type="ECO:0000305" key="2"/>
<gene>
    <name type="primary">srd-18</name>
    <name type="ORF">F53F1.10</name>
</gene>
<feature type="chain" id="PRO_0000104512" description="Serpentine receptor class delta-18">
    <location>
        <begin position="1"/>
        <end position="337"/>
    </location>
</feature>
<feature type="transmembrane region" description="Helical" evidence="1">
    <location>
        <begin position="2"/>
        <end position="22"/>
    </location>
</feature>
<feature type="transmembrane region" description="Helical" evidence="1">
    <location>
        <begin position="90"/>
        <end position="110"/>
    </location>
</feature>
<feature type="transmembrane region" description="Helical" evidence="1">
    <location>
        <begin position="130"/>
        <end position="150"/>
    </location>
</feature>
<feature type="transmembrane region" description="Helical" evidence="1">
    <location>
        <begin position="187"/>
        <end position="207"/>
    </location>
</feature>
<feature type="transmembrane region" description="Helical" evidence="1">
    <location>
        <begin position="236"/>
        <end position="256"/>
    </location>
</feature>
<feature type="transmembrane region" description="Helical" evidence="1">
    <location>
        <begin position="270"/>
        <end position="290"/>
    </location>
</feature>
<keyword id="KW-0472">Membrane</keyword>
<keyword id="KW-1185">Reference proteome</keyword>
<keyword id="KW-0812">Transmembrane</keyword>
<keyword id="KW-1133">Transmembrane helix</keyword>
<comment type="subcellular location">
    <subcellularLocation>
        <location evidence="2">Membrane</location>
        <topology evidence="2">Multi-pass membrane protein</topology>
    </subcellularLocation>
</comment>
<comment type="similarity">
    <text evidence="2">Belongs to the nematode receptor-like protein srd family.</text>
</comment>
<name>SRD18_CAEEL</name>
<reference key="1">
    <citation type="journal article" date="1998" name="Science">
        <title>Genome sequence of the nematode C. elegans: a platform for investigating biology.</title>
        <authorList>
            <consortium name="The C. elegans sequencing consortium"/>
        </authorList>
    </citation>
    <scope>NUCLEOTIDE SEQUENCE [LARGE SCALE GENOMIC DNA]</scope>
    <source>
        <strain>Bristol N2</strain>
    </source>
</reference>
<organism>
    <name type="scientific">Caenorhabditis elegans</name>
    <dbReference type="NCBI Taxonomy" id="6239"/>
    <lineage>
        <taxon>Eukaryota</taxon>
        <taxon>Metazoa</taxon>
        <taxon>Ecdysozoa</taxon>
        <taxon>Nematoda</taxon>
        <taxon>Chromadorea</taxon>
        <taxon>Rhabditida</taxon>
        <taxon>Rhabditina</taxon>
        <taxon>Rhabditomorpha</taxon>
        <taxon>Rhabditoidea</taxon>
        <taxon>Rhabditidae</taxon>
        <taxon>Peloderinae</taxon>
        <taxon>Caenorhabditis</taxon>
    </lineage>
</organism>
<protein>
    <recommendedName>
        <fullName>Serpentine receptor class delta-18</fullName>
        <shortName>Protein srd-18</shortName>
    </recommendedName>
</protein>
<proteinExistence type="inferred from homology"/>
<sequence length="337" mass="38256">MIIFFEIWHWSWALLGCYLNLLLAYLAIFKSPKAIKSYATLIINYAATDFVECALDSFLQTRLLAVPGEAELVYIFNGPCKYIGSISCKVGLSFFLHCLTHSVWSLLLSFGYRFYILHNPSLSRLVLLKLILVFYIPSLIQALTYWTIFASREEILPLARQWFPYYDLDAETGVLTGIIDLTNFVAIYSIGHICLPFFPVYITIFILRQKIINQLHVKQHVMSPDTKAAHSQLLKALTIQAFIPIFVGIAVTFYFLSQSGLVRSPILEYSIYAVAILAPALSPITYLYFVRPYRQNVKRFIANPFKILLNTNTGSSIGVFHSGGRPSNFATTLNTSR</sequence>